<reference evidence="5" key="1">
    <citation type="journal article" date="2012" name="Syst. Biol.">
        <title>Peptidomics-based phylogeny and biogeography of Mantophasmatodea (Hexapoda).</title>
        <authorList>
            <person name="Predel R."/>
            <person name="Neupert S."/>
            <person name="Huetteroth W."/>
            <person name="Kahnt J."/>
            <person name="Waidelich D."/>
            <person name="Roth S."/>
        </authorList>
    </citation>
    <scope>PROTEIN SEQUENCE</scope>
    <scope>PYROGLUTAMATE FORMATION AT GLN-1</scope>
    <scope>AMIDATION AT PHE-10</scope>
    <source>
        <tissue evidence="3">Corpora cardiaca</tissue>
    </source>
</reference>
<name>NEMS_HEMMO</name>
<comment type="function">
    <text evidence="1">Myoinhibiting neuropeptide.</text>
</comment>
<comment type="subcellular location">
    <subcellularLocation>
        <location evidence="6">Secreted</location>
    </subcellularLocation>
</comment>
<comment type="similarity">
    <text evidence="2">Belongs to the myosuppressin family.</text>
</comment>
<sequence>QDVDHVFLRF</sequence>
<evidence type="ECO:0000250" key="1">
    <source>
        <dbReference type="UniProtKB" id="P61849"/>
    </source>
</evidence>
<evidence type="ECO:0000255" key="2"/>
<evidence type="ECO:0000269" key="3">
    <source>
    </source>
</evidence>
<evidence type="ECO:0000303" key="4">
    <source>
    </source>
</evidence>
<evidence type="ECO:0000305" key="5"/>
<evidence type="ECO:0000305" key="6">
    <source>
    </source>
</evidence>
<protein>
    <recommendedName>
        <fullName evidence="4">Myosuppressin</fullName>
        <shortName evidence="4">MS</shortName>
    </recommendedName>
</protein>
<organism>
    <name type="scientific">Hemilobophasma montaguense</name>
    <name type="common">Gladiator</name>
    <name type="synonym">Heel-walker</name>
    <dbReference type="NCBI Taxonomy" id="253130"/>
    <lineage>
        <taxon>Eukaryota</taxon>
        <taxon>Metazoa</taxon>
        <taxon>Ecdysozoa</taxon>
        <taxon>Arthropoda</taxon>
        <taxon>Hexapoda</taxon>
        <taxon>Insecta</taxon>
        <taxon>Pterygota</taxon>
        <taxon>Neoptera</taxon>
        <taxon>Polyneoptera</taxon>
        <taxon>Mantophasmatodea</taxon>
        <taxon>Austrophasmatidae</taxon>
        <taxon>Hemilobophasma</taxon>
    </lineage>
</organism>
<accession>B3A0D4</accession>
<proteinExistence type="evidence at protein level"/>
<feature type="peptide" id="PRO_0000421712" description="Myosuppressin" evidence="3">
    <location>
        <begin position="1"/>
        <end position="10"/>
    </location>
</feature>
<feature type="modified residue" description="Pyrrolidone carboxylic acid" evidence="3">
    <location>
        <position position="1"/>
    </location>
</feature>
<feature type="modified residue" description="Phenylalanine amide" evidence="3">
    <location>
        <position position="10"/>
    </location>
</feature>
<keyword id="KW-0027">Amidation</keyword>
<keyword id="KW-0903">Direct protein sequencing</keyword>
<keyword id="KW-0527">Neuropeptide</keyword>
<keyword id="KW-0873">Pyrrolidone carboxylic acid</keyword>
<keyword id="KW-0964">Secreted</keyword>
<dbReference type="GO" id="GO:0005576">
    <property type="term" value="C:extracellular region"/>
    <property type="evidence" value="ECO:0007669"/>
    <property type="project" value="UniProtKB-SubCell"/>
</dbReference>
<dbReference type="GO" id="GO:0007218">
    <property type="term" value="P:neuropeptide signaling pathway"/>
    <property type="evidence" value="ECO:0007669"/>
    <property type="project" value="UniProtKB-KW"/>
</dbReference>